<dbReference type="EMBL" id="CM003148">
    <property type="protein sequence ID" value="KIS68396.1"/>
    <property type="molecule type" value="Genomic_DNA"/>
</dbReference>
<dbReference type="RefSeq" id="XP_011390091.1">
    <property type="nucleotide sequence ID" value="XM_011391789.1"/>
</dbReference>
<dbReference type="SMR" id="P0C197"/>
<dbReference type="FunCoup" id="P0C197">
    <property type="interactions" value="207"/>
</dbReference>
<dbReference type="EnsemblFungi" id="KIS68396">
    <property type="protein sequence ID" value="KIS68396"/>
    <property type="gene ID" value="UMAG_11084"/>
</dbReference>
<dbReference type="GeneID" id="23567013"/>
<dbReference type="KEGG" id="uma:UMAG_11084"/>
<dbReference type="VEuPathDB" id="FungiDB:UMAG_11084"/>
<dbReference type="eggNOG" id="KOG0415">
    <property type="taxonomic scope" value="Eukaryota"/>
</dbReference>
<dbReference type="eggNOG" id="KOG0475">
    <property type="taxonomic scope" value="Eukaryota"/>
</dbReference>
<dbReference type="eggNOG" id="KOG0590">
    <property type="taxonomic scope" value="Eukaryota"/>
</dbReference>
<dbReference type="eggNOG" id="KOG2210">
    <property type="taxonomic scope" value="Eukaryota"/>
</dbReference>
<dbReference type="InParanoid" id="P0C197"/>
<dbReference type="OrthoDB" id="44789at2759"/>
<dbReference type="Proteomes" id="UP000000561">
    <property type="component" value="Chromosome 9"/>
</dbReference>
<dbReference type="GO" id="GO:0034707">
    <property type="term" value="C:chloride channel complex"/>
    <property type="evidence" value="ECO:0007669"/>
    <property type="project" value="UniProtKB-KW"/>
</dbReference>
<dbReference type="GO" id="GO:0005769">
    <property type="term" value="C:early endosome"/>
    <property type="evidence" value="ECO:0000318"/>
    <property type="project" value="GO_Central"/>
</dbReference>
<dbReference type="GO" id="GO:0005783">
    <property type="term" value="C:endoplasmic reticulum"/>
    <property type="evidence" value="ECO:0000318"/>
    <property type="project" value="GO_Central"/>
</dbReference>
<dbReference type="GO" id="GO:0000324">
    <property type="term" value="C:fungal-type vacuole"/>
    <property type="evidence" value="ECO:0000318"/>
    <property type="project" value="GO_Central"/>
</dbReference>
<dbReference type="GO" id="GO:0005794">
    <property type="term" value="C:Golgi apparatus"/>
    <property type="evidence" value="ECO:0000318"/>
    <property type="project" value="GO_Central"/>
</dbReference>
<dbReference type="GO" id="GO:0005886">
    <property type="term" value="C:plasma membrane"/>
    <property type="evidence" value="ECO:0000318"/>
    <property type="project" value="GO_Central"/>
</dbReference>
<dbReference type="GO" id="GO:0005247">
    <property type="term" value="F:voltage-gated chloride channel activity"/>
    <property type="evidence" value="ECO:0000318"/>
    <property type="project" value="GO_Central"/>
</dbReference>
<dbReference type="GO" id="GO:0006878">
    <property type="term" value="P:intracellular copper ion homeostasis"/>
    <property type="evidence" value="ECO:0000318"/>
    <property type="project" value="GO_Central"/>
</dbReference>
<dbReference type="GO" id="GO:0006879">
    <property type="term" value="P:intracellular iron ion homeostasis"/>
    <property type="evidence" value="ECO:0000318"/>
    <property type="project" value="GO_Central"/>
</dbReference>
<dbReference type="CDD" id="cd04591">
    <property type="entry name" value="CBS_pair_voltage-gated_CLC_euk_bac"/>
    <property type="match status" value="1"/>
</dbReference>
<dbReference type="CDD" id="cd03684">
    <property type="entry name" value="ClC_3_like"/>
    <property type="match status" value="1"/>
</dbReference>
<dbReference type="FunFam" id="1.10.3080.10:FF:000011">
    <property type="entry name" value="Chloride channel protein"/>
    <property type="match status" value="1"/>
</dbReference>
<dbReference type="FunFam" id="3.90.1280.20:FF:000007">
    <property type="entry name" value="Chloride channel protein"/>
    <property type="match status" value="1"/>
</dbReference>
<dbReference type="Gene3D" id="3.10.580.20">
    <property type="match status" value="1"/>
</dbReference>
<dbReference type="Gene3D" id="3.90.1280.20">
    <property type="match status" value="1"/>
</dbReference>
<dbReference type="Gene3D" id="1.10.3080.10">
    <property type="entry name" value="Clc chloride channel"/>
    <property type="match status" value="1"/>
</dbReference>
<dbReference type="InterPro" id="IPR000644">
    <property type="entry name" value="CBS_dom"/>
</dbReference>
<dbReference type="InterPro" id="IPR046342">
    <property type="entry name" value="CBS_dom_sf"/>
</dbReference>
<dbReference type="InterPro" id="IPR014743">
    <property type="entry name" value="Cl-channel_core"/>
</dbReference>
<dbReference type="InterPro" id="IPR001807">
    <property type="entry name" value="ClC"/>
</dbReference>
<dbReference type="PANTHER" id="PTHR45711:SF9">
    <property type="entry name" value="ANION_PROTON EXCHANGE TRANSPORTER GEF1"/>
    <property type="match status" value="1"/>
</dbReference>
<dbReference type="PANTHER" id="PTHR45711">
    <property type="entry name" value="CHLORIDE CHANNEL PROTEIN"/>
    <property type="match status" value="1"/>
</dbReference>
<dbReference type="Pfam" id="PF00571">
    <property type="entry name" value="CBS"/>
    <property type="match status" value="1"/>
</dbReference>
<dbReference type="Pfam" id="PF00654">
    <property type="entry name" value="Voltage_CLC"/>
    <property type="match status" value="1"/>
</dbReference>
<dbReference type="PRINTS" id="PR00762">
    <property type="entry name" value="CLCHANNEL"/>
</dbReference>
<dbReference type="SMART" id="SM00116">
    <property type="entry name" value="CBS"/>
    <property type="match status" value="1"/>
</dbReference>
<dbReference type="SUPFAM" id="SSF54631">
    <property type="entry name" value="CBS-domain pair"/>
    <property type="match status" value="1"/>
</dbReference>
<dbReference type="SUPFAM" id="SSF81340">
    <property type="entry name" value="Clc chloride channel"/>
    <property type="match status" value="1"/>
</dbReference>
<dbReference type="PROSITE" id="PS51371">
    <property type="entry name" value="CBS"/>
    <property type="match status" value="1"/>
</dbReference>
<proteinExistence type="inferred from homology"/>
<comment type="function">
    <text evidence="1">Voltage-gated chloride channel.</text>
</comment>
<comment type="subcellular location">
    <subcellularLocation>
        <location evidence="5">Membrane</location>
        <topology evidence="5">Multi-pass membrane protein</topology>
    </subcellularLocation>
</comment>
<comment type="similarity">
    <text evidence="5">Belongs to the chloride channel (TC 2.A.49) family.</text>
</comment>
<accession>P0C197</accession>
<accession>A0A0D1DXR2</accession>
<accession>Q4P8S3</accession>
<gene>
    <name type="ORF">UMAG_11084</name>
</gene>
<keyword id="KW-0868">Chloride</keyword>
<keyword id="KW-0869">Chloride channel</keyword>
<keyword id="KW-0407">Ion channel</keyword>
<keyword id="KW-0406">Ion transport</keyword>
<keyword id="KW-0472">Membrane</keyword>
<keyword id="KW-1185">Reference proteome</keyword>
<keyword id="KW-0812">Transmembrane</keyword>
<keyword id="KW-1133">Transmembrane helix</keyword>
<keyword id="KW-0813">Transport</keyword>
<sequence>MNASPHSKPSAALAPSPTAAFFPSTSRVYTSKAATVVDDDEALDEIRRYESFSTVDWVVDNTRERNRLARERQAASAHFVSSSSNAHLGNADAAWGHIGFGRGGVPPRWWSRGPWGRRAWLVWGIVKSASSAFTDSGVIVLVGILIGLNMGVISLATEWASDLKQGYCSSGWWLNQKFCCWEMMDQAGPGGAPLPAAAKALATATVTVTASIGAAAAATDSAPILPATPAATPTAAIRAVAQEAYNLTIRAIPDHQLWSRSAQDVIQDGFGTGLRLLSRAEGAASGAGDLSETCTDWVRWSKWSFPAWIIYMLFAGLLSFICAHLVKSFAPYAAGSGISEIKCILAGFVINGYLGFWTLAIKSLTLPLAIASGLSVGKEGPAVHVACCIGNVVASFFRSFNRSQAKMRELLTASSAAGVAVAFGSPIGGVLFSLEEMAYNFPASTMWRSFLCALAATVTLSFMNPFRTGKLVLFQVSYDRDWHYFEIMFYILIGIFGGLYGAFVIKYNLQVQSFRRSYLVKHGVSEVVVLATLTAFVGYANKFLRIDMTESLEILFRECEGGGDYDNLCQSWAQWRMVNSLLLATVLRTALVIVSYGCKVPAGIFVPSMAIGATFGRMVGILVKALYNAFPHWSLFSACQPDVPCITPGTYAFLGAAAALAGVTRITVAVVVIMFELTGALTYILPTMIVVGITKGVADWFSRGGIAEQMIKFSGYPFLDKDDHNFGIPVADVMRVCPQVLFASGMKLSELEGKLADGSYKGFPLVLAKHDATLLGYVGKVELRYAIGKARRARALDGDTLCLFSVGPNALDRADGVESSAHGAQQQQPDLLSVASLPTTAAADRAVREDMLSRFSGATGAGSASGLGSTSATGVASQRRHESESLIGQLDVEDDRSSAPSYRSRVDAGDNMSSSSDDDAVVGNAGGGVDGESDLDKLELGGWIDPTPLIVQPGMPLETVMDMFKNLGPRVILVVEYGRLSGLVTVKDVLKRIAMQEKAEAAARTAAAAGLPMSGSANSFTGEGAGAGGGELEALLKEAYEWAQEKWALISPRIERISARRASASRGGAPGSQAGQARYSHLRESTEDRYDDSDAVAEDMPMHSTRQTSATKNTRSEHHQFVLGAQDDDDE</sequence>
<feature type="chain" id="PRO_0000232936" description="Probable chloride channel protein UM03490-D">
    <location>
        <begin position="1"/>
        <end position="1131"/>
    </location>
</feature>
<feature type="transmembrane region" description="Helical" evidence="2">
    <location>
        <begin position="137"/>
        <end position="157"/>
    </location>
</feature>
<feature type="transmembrane region" description="Helical" evidence="2">
    <location>
        <begin position="206"/>
        <end position="226"/>
    </location>
</feature>
<feature type="transmembrane region" description="Helical" evidence="2">
    <location>
        <begin position="305"/>
        <end position="325"/>
    </location>
</feature>
<feature type="transmembrane region" description="Helical" evidence="2">
    <location>
        <begin position="341"/>
        <end position="361"/>
    </location>
</feature>
<feature type="transmembrane region" description="Helical" evidence="2">
    <location>
        <begin position="380"/>
        <end position="397"/>
    </location>
</feature>
<feature type="transmembrane region" description="Helical" evidence="2">
    <location>
        <begin position="414"/>
        <end position="434"/>
    </location>
</feature>
<feature type="transmembrane region" description="Helical" evidence="2">
    <location>
        <begin position="485"/>
        <end position="505"/>
    </location>
</feature>
<feature type="transmembrane region" description="Helical" evidence="2">
    <location>
        <begin position="518"/>
        <end position="538"/>
    </location>
</feature>
<feature type="transmembrane region" description="Helical" evidence="2">
    <location>
        <begin position="577"/>
        <end position="597"/>
    </location>
</feature>
<feature type="transmembrane region" description="Helical" evidence="2">
    <location>
        <begin position="603"/>
        <end position="623"/>
    </location>
</feature>
<feature type="transmembrane region" description="Helical" evidence="2">
    <location>
        <begin position="643"/>
        <end position="663"/>
    </location>
</feature>
<feature type="transmembrane region" description="Helical" evidence="2">
    <location>
        <begin position="680"/>
        <end position="702"/>
    </location>
</feature>
<feature type="domain" description="CBS" evidence="3">
    <location>
        <begin position="944"/>
        <end position="1000"/>
    </location>
</feature>
<feature type="region of interest" description="Disordered" evidence="4">
    <location>
        <begin position="815"/>
        <end position="835"/>
    </location>
</feature>
<feature type="region of interest" description="Disordered" evidence="4">
    <location>
        <begin position="858"/>
        <end position="928"/>
    </location>
</feature>
<feature type="region of interest" description="Disordered" evidence="4">
    <location>
        <begin position="1061"/>
        <end position="1131"/>
    </location>
</feature>
<feature type="compositionally biased region" description="Low complexity" evidence="4">
    <location>
        <begin position="866"/>
        <end position="877"/>
    </location>
</feature>
<feature type="compositionally biased region" description="Low complexity" evidence="4">
    <location>
        <begin position="1061"/>
        <end position="1078"/>
    </location>
</feature>
<feature type="compositionally biased region" description="Polar residues" evidence="4">
    <location>
        <begin position="1104"/>
        <end position="1113"/>
    </location>
</feature>
<name>CLCNX_MYCMD</name>
<protein>
    <recommendedName>
        <fullName>Probable chloride channel protein UM03490-D</fullName>
    </recommendedName>
</protein>
<evidence type="ECO:0000250" key="1"/>
<evidence type="ECO:0000255" key="2"/>
<evidence type="ECO:0000255" key="3">
    <source>
        <dbReference type="PROSITE-ProRule" id="PRU00703"/>
    </source>
</evidence>
<evidence type="ECO:0000256" key="4">
    <source>
        <dbReference type="SAM" id="MobiDB-lite"/>
    </source>
</evidence>
<evidence type="ECO:0000305" key="5"/>
<reference key="1">
    <citation type="journal article" date="2006" name="Nature">
        <title>Insights from the genome of the biotrophic fungal plant pathogen Ustilago maydis.</title>
        <authorList>
            <person name="Kaemper J."/>
            <person name="Kahmann R."/>
            <person name="Boelker M."/>
            <person name="Ma L.-J."/>
            <person name="Brefort T."/>
            <person name="Saville B.J."/>
            <person name="Banuett F."/>
            <person name="Kronstad J.W."/>
            <person name="Gold S.E."/>
            <person name="Mueller O."/>
            <person name="Perlin M.H."/>
            <person name="Woesten H.A.B."/>
            <person name="de Vries R."/>
            <person name="Ruiz-Herrera J."/>
            <person name="Reynaga-Pena C.G."/>
            <person name="Snetselaar K."/>
            <person name="McCann M."/>
            <person name="Perez-Martin J."/>
            <person name="Feldbruegge M."/>
            <person name="Basse C.W."/>
            <person name="Steinberg G."/>
            <person name="Ibeas J.I."/>
            <person name="Holloman W."/>
            <person name="Guzman P."/>
            <person name="Farman M.L."/>
            <person name="Stajich J.E."/>
            <person name="Sentandreu R."/>
            <person name="Gonzalez-Prieto J.M."/>
            <person name="Kennell J.C."/>
            <person name="Molina L."/>
            <person name="Schirawski J."/>
            <person name="Mendoza-Mendoza A."/>
            <person name="Greilinger D."/>
            <person name="Muench K."/>
            <person name="Roessel N."/>
            <person name="Scherer M."/>
            <person name="Vranes M."/>
            <person name="Ladendorf O."/>
            <person name="Vincon V."/>
            <person name="Fuchs U."/>
            <person name="Sandrock B."/>
            <person name="Meng S."/>
            <person name="Ho E.C.H."/>
            <person name="Cahill M.J."/>
            <person name="Boyce K.J."/>
            <person name="Klose J."/>
            <person name="Klosterman S.J."/>
            <person name="Deelstra H.J."/>
            <person name="Ortiz-Castellanos L."/>
            <person name="Li W."/>
            <person name="Sanchez-Alonso P."/>
            <person name="Schreier P.H."/>
            <person name="Haeuser-Hahn I."/>
            <person name="Vaupel M."/>
            <person name="Koopmann E."/>
            <person name="Friedrich G."/>
            <person name="Voss H."/>
            <person name="Schlueter T."/>
            <person name="Margolis J."/>
            <person name="Platt D."/>
            <person name="Swimmer C."/>
            <person name="Gnirke A."/>
            <person name="Chen F."/>
            <person name="Vysotskaia V."/>
            <person name="Mannhaupt G."/>
            <person name="Gueldener U."/>
            <person name="Muensterkoetter M."/>
            <person name="Haase D."/>
            <person name="Oesterheld M."/>
            <person name="Mewes H.-W."/>
            <person name="Mauceli E.W."/>
            <person name="DeCaprio D."/>
            <person name="Wade C.M."/>
            <person name="Butler J."/>
            <person name="Young S.K."/>
            <person name="Jaffe D.B."/>
            <person name="Calvo S.E."/>
            <person name="Nusbaum C."/>
            <person name="Galagan J.E."/>
            <person name="Birren B.W."/>
        </authorList>
    </citation>
    <scope>NUCLEOTIDE SEQUENCE [LARGE SCALE GENOMIC DNA]</scope>
    <source>
        <strain>DSM 14603 / FGSC 9021 / UM521</strain>
    </source>
</reference>
<reference key="2">
    <citation type="submission" date="2014-09" db="EMBL/GenBank/DDBJ databases">
        <authorList>
            <person name="Gueldener U."/>
            <person name="Muensterkoetter M."/>
            <person name="Walter M.C."/>
            <person name="Mannhaupt G."/>
            <person name="Kahmann R."/>
        </authorList>
    </citation>
    <scope>GENOME REANNOTATION</scope>
    <source>
        <strain>DSM 14603 / FGSC 9021 / UM521</strain>
    </source>
</reference>
<organism>
    <name type="scientific">Mycosarcoma maydis</name>
    <name type="common">Corn smut fungus</name>
    <name type="synonym">Ustilago maydis</name>
    <dbReference type="NCBI Taxonomy" id="5270"/>
    <lineage>
        <taxon>Eukaryota</taxon>
        <taxon>Fungi</taxon>
        <taxon>Dikarya</taxon>
        <taxon>Basidiomycota</taxon>
        <taxon>Ustilaginomycotina</taxon>
        <taxon>Ustilaginomycetes</taxon>
        <taxon>Ustilaginales</taxon>
        <taxon>Ustilaginaceae</taxon>
        <taxon>Mycosarcoma</taxon>
    </lineage>
</organism>